<sequence length="473" mass="50392">MKTDTPSLETPQAARLRRRQLIRQLLERDKTPLAILFMAAVVGTLVGLAAVAFDKGVAWLQNQRMGALVHTADNYPLLLTVAFLCSAVLAMFGYFLVRKYAPEAGGSGIPEIEGALEDQRPVRWWRVLPVKFFGGLGTLGGGMVLGREGPTVQIGGNIGRMVLDIFRLKGDEARHTLLATGAAAGLAAAFNAPLAGILFIIEEMRPQFRYTLISIKAVFIGVIMSTIMYRIFNHEVALIDVGKLSDAPLNTQWLYLILGIIFGIFGPIFNKWVLGMQDLLHRVHGGNITKWVLMGGAIGGLCGLLGFVAPATSGGGFNLIPIATAGNFSMGMLVFIFVARVITTLLCFSSGAPGGIFAPMLALGTVLGTAFGMVVVELFPQYHLEAGTFAIAGMGALLAASIRAPLTGIILVLEMTDNYQLILPMIITGLGATLLAQFTGGKPLYSAILARTLAKQEAEQLARSKAASASENT</sequence>
<comment type="function">
    <text evidence="1">Proton-coupled chloride transporter. Functions as antiport system and exchanges two chloride ions for 1 proton. Probably acts as an electrical shunt for an outwardly-directed proton pump that is linked to amino acid decarboxylation, as part of the extreme acid resistance (XAR) response.</text>
</comment>
<comment type="catalytic activity">
    <reaction evidence="1">
        <text>2 chloride(in) + H(+)(out) = 2 chloride(out) + H(+)(in)</text>
        <dbReference type="Rhea" id="RHEA:29567"/>
        <dbReference type="ChEBI" id="CHEBI:15378"/>
        <dbReference type="ChEBI" id="CHEBI:17996"/>
    </reaction>
</comment>
<comment type="subunit">
    <text evidence="1">Homodimer.</text>
</comment>
<comment type="subcellular location">
    <subcellularLocation>
        <location evidence="1">Cell inner membrane</location>
        <topology evidence="1">Multi-pass membrane protein</topology>
    </subcellularLocation>
</comment>
<comment type="similarity">
    <text evidence="1">Belongs to the chloride channel (TC 2.A.49) family. ClcA subfamily.</text>
</comment>
<dbReference type="EMBL" id="CP001063">
    <property type="protein sequence ID" value="ACD10154.1"/>
    <property type="molecule type" value="Genomic_DNA"/>
</dbReference>
<dbReference type="RefSeq" id="WP_000845402.1">
    <property type="nucleotide sequence ID" value="NC_010658.1"/>
</dbReference>
<dbReference type="SMR" id="B2U300"/>
<dbReference type="STRING" id="344609.SbBS512_E0147"/>
<dbReference type="KEGG" id="sbc:SbBS512_E0147"/>
<dbReference type="HOGENOM" id="CLU_015263_7_0_6"/>
<dbReference type="Proteomes" id="UP000001030">
    <property type="component" value="Chromosome"/>
</dbReference>
<dbReference type="GO" id="GO:0005886">
    <property type="term" value="C:plasma membrane"/>
    <property type="evidence" value="ECO:0007669"/>
    <property type="project" value="UniProtKB-SubCell"/>
</dbReference>
<dbReference type="GO" id="GO:0015297">
    <property type="term" value="F:antiporter activity"/>
    <property type="evidence" value="ECO:0007669"/>
    <property type="project" value="UniProtKB-UniRule"/>
</dbReference>
<dbReference type="GO" id="GO:0005247">
    <property type="term" value="F:voltage-gated chloride channel activity"/>
    <property type="evidence" value="ECO:0007669"/>
    <property type="project" value="TreeGrafter"/>
</dbReference>
<dbReference type="CDD" id="cd01031">
    <property type="entry name" value="EriC"/>
    <property type="match status" value="1"/>
</dbReference>
<dbReference type="FunFam" id="1.10.3080.10:FF:000005">
    <property type="entry name" value="H(+)/Cl(-) exchange transporter ClcA"/>
    <property type="match status" value="1"/>
</dbReference>
<dbReference type="Gene3D" id="1.10.3080.10">
    <property type="entry name" value="Clc chloride channel"/>
    <property type="match status" value="1"/>
</dbReference>
<dbReference type="HAMAP" id="MF_01128">
    <property type="entry name" value="CLC_ClcA"/>
    <property type="match status" value="1"/>
</dbReference>
<dbReference type="InterPro" id="IPR023861">
    <property type="entry name" value="Cl-channel_ClcA"/>
</dbReference>
<dbReference type="InterPro" id="IPR014743">
    <property type="entry name" value="Cl-channel_core"/>
</dbReference>
<dbReference type="InterPro" id="IPR001807">
    <property type="entry name" value="ClC"/>
</dbReference>
<dbReference type="NCBIfam" id="NF003640">
    <property type="entry name" value="PRK05277.1"/>
    <property type="match status" value="1"/>
</dbReference>
<dbReference type="PANTHER" id="PTHR45711">
    <property type="entry name" value="CHLORIDE CHANNEL PROTEIN"/>
    <property type="match status" value="1"/>
</dbReference>
<dbReference type="PANTHER" id="PTHR45711:SF6">
    <property type="entry name" value="CHLORIDE CHANNEL PROTEIN"/>
    <property type="match status" value="1"/>
</dbReference>
<dbReference type="Pfam" id="PF00654">
    <property type="entry name" value="Voltage_CLC"/>
    <property type="match status" value="1"/>
</dbReference>
<dbReference type="PRINTS" id="PR00762">
    <property type="entry name" value="CLCHANNEL"/>
</dbReference>
<dbReference type="SUPFAM" id="SSF81340">
    <property type="entry name" value="Clc chloride channel"/>
    <property type="match status" value="1"/>
</dbReference>
<accession>B2U300</accession>
<evidence type="ECO:0000255" key="1">
    <source>
        <dbReference type="HAMAP-Rule" id="MF_01128"/>
    </source>
</evidence>
<reference key="1">
    <citation type="submission" date="2008-05" db="EMBL/GenBank/DDBJ databases">
        <title>Complete sequence of Shigella boydii serotype 18 strain BS512.</title>
        <authorList>
            <person name="Rasko D.A."/>
            <person name="Rosovitz M."/>
            <person name="Maurelli A.T."/>
            <person name="Myers G."/>
            <person name="Seshadri R."/>
            <person name="Cer R."/>
            <person name="Jiang L."/>
            <person name="Ravel J."/>
            <person name="Sebastian Y."/>
        </authorList>
    </citation>
    <scope>NUCLEOTIDE SEQUENCE [LARGE SCALE GENOMIC DNA]</scope>
    <source>
        <strain>CDC 3083-94 / BS512</strain>
    </source>
</reference>
<protein>
    <recommendedName>
        <fullName evidence="1">H(+)/Cl(-) exchange transporter ClcA</fullName>
    </recommendedName>
</protein>
<name>CLCA_SHIB3</name>
<gene>
    <name evidence="1" type="primary">clcA</name>
    <name evidence="1" type="synonym">eriC</name>
    <name type="ordered locus">SbBS512_E0147</name>
</gene>
<organism>
    <name type="scientific">Shigella boydii serotype 18 (strain CDC 3083-94 / BS512)</name>
    <dbReference type="NCBI Taxonomy" id="344609"/>
    <lineage>
        <taxon>Bacteria</taxon>
        <taxon>Pseudomonadati</taxon>
        <taxon>Pseudomonadota</taxon>
        <taxon>Gammaproteobacteria</taxon>
        <taxon>Enterobacterales</taxon>
        <taxon>Enterobacteriaceae</taxon>
        <taxon>Shigella</taxon>
    </lineage>
</organism>
<keyword id="KW-0050">Antiport</keyword>
<keyword id="KW-0997">Cell inner membrane</keyword>
<keyword id="KW-1003">Cell membrane</keyword>
<keyword id="KW-0868">Chloride</keyword>
<keyword id="KW-0406">Ion transport</keyword>
<keyword id="KW-0472">Membrane</keyword>
<keyword id="KW-1185">Reference proteome</keyword>
<keyword id="KW-0812">Transmembrane</keyword>
<keyword id="KW-1133">Transmembrane helix</keyword>
<keyword id="KW-0813">Transport</keyword>
<feature type="chain" id="PRO_1000137311" description="H(+)/Cl(-) exchange transporter ClcA">
    <location>
        <begin position="1"/>
        <end position="473"/>
    </location>
</feature>
<feature type="topological domain" description="Cytoplasmic" evidence="1">
    <location>
        <begin position="1"/>
        <end position="32"/>
    </location>
</feature>
<feature type="transmembrane region" description="Helical" evidence="1">
    <location>
        <begin position="33"/>
        <end position="69"/>
    </location>
</feature>
<feature type="topological domain" description="Periplasmic" evidence="1">
    <location>
        <begin position="70"/>
        <end position="76"/>
    </location>
</feature>
<feature type="transmembrane region" description="Helical" evidence="1">
    <location>
        <begin position="77"/>
        <end position="100"/>
    </location>
</feature>
<feature type="intramembrane region" description="Helical" evidence="1">
    <location>
        <begin position="109"/>
        <end position="116"/>
    </location>
</feature>
<feature type="topological domain" description="Cytoplasmic" evidence="1">
    <location>
        <begin position="117"/>
        <end position="123"/>
    </location>
</feature>
<feature type="transmembrane region" description="Helical" evidence="1">
    <location>
        <begin position="124"/>
        <end position="141"/>
    </location>
</feature>
<feature type="transmembrane region" description="Helical" evidence="1">
    <location>
        <begin position="148"/>
        <end position="166"/>
    </location>
</feature>
<feature type="topological domain" description="Cytoplasmic" evidence="1">
    <location>
        <begin position="167"/>
        <end position="176"/>
    </location>
</feature>
<feature type="intramembrane region" description="Helical" evidence="1">
    <location>
        <begin position="177"/>
        <end position="189"/>
    </location>
</feature>
<feature type="intramembrane region" description="Helical" evidence="1">
    <location>
        <begin position="193"/>
        <end position="201"/>
    </location>
</feature>
<feature type="topological domain" description="Cytoplasmic" evidence="1">
    <location>
        <begin position="202"/>
        <end position="214"/>
    </location>
</feature>
<feature type="transmembrane region" description="Helical" evidence="1">
    <location>
        <begin position="215"/>
        <end position="232"/>
    </location>
</feature>
<feature type="topological domain" description="Periplasmic" evidence="1">
    <location>
        <begin position="233"/>
        <end position="252"/>
    </location>
</feature>
<feature type="transmembrane region" description="Helical" evidence="1">
    <location>
        <begin position="253"/>
        <end position="281"/>
    </location>
</feature>
<feature type="topological domain" description="Cytoplasmic" evidence="1">
    <location>
        <begin position="282"/>
        <end position="287"/>
    </location>
</feature>
<feature type="transmembrane region" description="Helical" evidence="1">
    <location>
        <begin position="288"/>
        <end position="309"/>
    </location>
</feature>
<feature type="topological domain" description="Periplasmic" evidence="1">
    <location>
        <begin position="310"/>
        <end position="329"/>
    </location>
</feature>
<feature type="transmembrane region" description="Helical" evidence="1">
    <location>
        <begin position="330"/>
        <end position="349"/>
    </location>
</feature>
<feature type="transmembrane region" description="Helical" evidence="1">
    <location>
        <begin position="355"/>
        <end position="376"/>
    </location>
</feature>
<feature type="topological domain" description="Periplasmic" evidence="1">
    <location>
        <begin position="377"/>
        <end position="386"/>
    </location>
</feature>
<feature type="intramembrane region" description="Helical" evidence="1">
    <location>
        <begin position="387"/>
        <end position="401"/>
    </location>
</feature>
<feature type="intramembrane region" description="Note=Loop between two helices" evidence="1">
    <location>
        <begin position="402"/>
        <end position="404"/>
    </location>
</feature>
<feature type="intramembrane region" description="Helical" evidence="1">
    <location>
        <begin position="405"/>
        <end position="416"/>
    </location>
</feature>
<feature type="intramembrane region" description="Note=Loop between two helices" evidence="1">
    <location>
        <begin position="417"/>
        <end position="421"/>
    </location>
</feature>
<feature type="transmembrane region" description="Helical" evidence="1">
    <location>
        <begin position="422"/>
        <end position="438"/>
    </location>
</feature>
<feature type="topological domain" description="Cytoplasmic" evidence="1">
    <location>
        <begin position="439"/>
        <end position="473"/>
    </location>
</feature>
<feature type="short sequence motif" description="Selectivity filter part_1" evidence="1">
    <location>
        <begin position="106"/>
        <end position="110"/>
    </location>
</feature>
<feature type="short sequence motif" description="Selectivity filter part_2" evidence="1">
    <location>
        <begin position="146"/>
        <end position="150"/>
    </location>
</feature>
<feature type="short sequence motif" description="Selectivity filter part_3" evidence="1">
    <location>
        <begin position="355"/>
        <end position="359"/>
    </location>
</feature>
<feature type="binding site" evidence="1">
    <location>
        <position position="107"/>
    </location>
    <ligand>
        <name>chloride</name>
        <dbReference type="ChEBI" id="CHEBI:17996"/>
    </ligand>
</feature>
<feature type="binding site" evidence="1">
    <location>
        <position position="356"/>
    </location>
    <ligand>
        <name>chloride</name>
        <dbReference type="ChEBI" id="CHEBI:17996"/>
    </ligand>
</feature>
<feature type="binding site" evidence="1">
    <location>
        <position position="357"/>
    </location>
    <ligand>
        <name>chloride</name>
        <dbReference type="ChEBI" id="CHEBI:17996"/>
    </ligand>
</feature>
<feature type="binding site" evidence="1">
    <location>
        <position position="445"/>
    </location>
    <ligand>
        <name>chloride</name>
        <dbReference type="ChEBI" id="CHEBI:17996"/>
    </ligand>
</feature>
<feature type="site" description="Mediates proton transfer from the outer aqueous phase to the interior of the protein; involved in linking H(+) and Cl(-) transport" evidence="1">
    <location>
        <position position="148"/>
    </location>
</feature>
<feature type="site" description="Mediates proton transfer from the protein to the inner aqueous phase" evidence="1">
    <location>
        <position position="203"/>
    </location>
</feature>
<proteinExistence type="inferred from homology"/>